<organism>
    <name type="scientific">Colwellia psychrerythraea (strain 34H / ATCC BAA-681)</name>
    <name type="common">Vibrio psychroerythus</name>
    <dbReference type="NCBI Taxonomy" id="167879"/>
    <lineage>
        <taxon>Bacteria</taxon>
        <taxon>Pseudomonadati</taxon>
        <taxon>Pseudomonadota</taxon>
        <taxon>Gammaproteobacteria</taxon>
        <taxon>Alteromonadales</taxon>
        <taxon>Colwelliaceae</taxon>
        <taxon>Colwellia</taxon>
    </lineage>
</organism>
<gene>
    <name evidence="1" type="primary">lepA</name>
    <name type="ordered locus">CPS_4124</name>
</gene>
<feature type="chain" id="PRO_0000224753" description="Elongation factor 4">
    <location>
        <begin position="1"/>
        <end position="596"/>
    </location>
</feature>
<feature type="domain" description="tr-type G">
    <location>
        <begin position="2"/>
        <end position="184"/>
    </location>
</feature>
<feature type="binding site" evidence="1">
    <location>
        <begin position="14"/>
        <end position="19"/>
    </location>
    <ligand>
        <name>GTP</name>
        <dbReference type="ChEBI" id="CHEBI:37565"/>
    </ligand>
</feature>
<feature type="binding site" evidence="1">
    <location>
        <begin position="131"/>
        <end position="134"/>
    </location>
    <ligand>
        <name>GTP</name>
        <dbReference type="ChEBI" id="CHEBI:37565"/>
    </ligand>
</feature>
<sequence>MKNIRNFSIIAHIDHGKSTLSDRLIQHCGGLQAREMEAQVLDSMDIERERGITIKAQSVTLDYKAKDGEIYQLNFIDTPGHVDFSYEVSRSLASCEGALLVVDAGQGVEAQTVANCYTALEMDLEVLPILNKIDLPQADPERVCEEIEHIIGIDATDAVTCSAKTGIGIEDVLETIVKNIPSPAGQIDAPLQALIVDSWFDNYQGVVSLVRVINGEVKKGDKMLVMSTGQVHQIDKVGIFTPKQTDTGVLRAGEVGFIIAGIKEIHGAPVGDTITISKKETANALPGFKKAQPQVYAGIFPISSDDYENFRDALNKLSLNDASLFFEPENSSALGFGFRIGFLGMLHMEIIQERLAREYDLDLITTAPTVNYEIASTNGDVISIDNPADLPAINNIEEIREPIVQANILVPQEYLGNVITLCIEKRGVQKDLIYHGNQVAVTYELPMAEVVMDFFDKLKSTSRGYASLDYHFIRFEAADMVRVDVMINGDRVDALAMITHRANSVARGRLLVDKLKELIHRQMFDIAIQAAIGNNVIARTTVKQLRKNVTAKCYGGDISRKKKLLQKQKDGKKRMKQVGNVEVPQEAFLAVLKLDS</sequence>
<protein>
    <recommendedName>
        <fullName evidence="1">Elongation factor 4</fullName>
        <shortName evidence="1">EF-4</shortName>
        <ecNumber evidence="1">3.6.5.n1</ecNumber>
    </recommendedName>
    <alternativeName>
        <fullName evidence="1">Ribosomal back-translocase LepA</fullName>
    </alternativeName>
</protein>
<reference key="1">
    <citation type="journal article" date="2005" name="Proc. Natl. Acad. Sci. U.S.A.">
        <title>The psychrophilic lifestyle as revealed by the genome sequence of Colwellia psychrerythraea 34H through genomic and proteomic analyses.</title>
        <authorList>
            <person name="Methe B.A."/>
            <person name="Nelson K.E."/>
            <person name="Deming J.W."/>
            <person name="Momen B."/>
            <person name="Melamud E."/>
            <person name="Zhang X."/>
            <person name="Moult J."/>
            <person name="Madupu R."/>
            <person name="Nelson W.C."/>
            <person name="Dodson R.J."/>
            <person name="Brinkac L.M."/>
            <person name="Daugherty S.C."/>
            <person name="Durkin A.S."/>
            <person name="DeBoy R.T."/>
            <person name="Kolonay J.F."/>
            <person name="Sullivan S.A."/>
            <person name="Zhou L."/>
            <person name="Davidsen T.M."/>
            <person name="Wu M."/>
            <person name="Huston A.L."/>
            <person name="Lewis M."/>
            <person name="Weaver B."/>
            <person name="Weidman J.F."/>
            <person name="Khouri H."/>
            <person name="Utterback T.R."/>
            <person name="Feldblyum T.V."/>
            <person name="Fraser C.M."/>
        </authorList>
    </citation>
    <scope>NUCLEOTIDE SEQUENCE [LARGE SCALE GENOMIC DNA]</scope>
    <source>
        <strain>34H / ATCC BAA-681</strain>
    </source>
</reference>
<name>LEPA_COLP3</name>
<dbReference type="EC" id="3.6.5.n1" evidence="1"/>
<dbReference type="EMBL" id="CP000083">
    <property type="protein sequence ID" value="AAZ28048.1"/>
    <property type="molecule type" value="Genomic_DNA"/>
</dbReference>
<dbReference type="RefSeq" id="WP_011044860.1">
    <property type="nucleotide sequence ID" value="NC_003910.7"/>
</dbReference>
<dbReference type="SMR" id="Q47WP3"/>
<dbReference type="STRING" id="167879.CPS_4124"/>
<dbReference type="KEGG" id="cps:CPS_4124"/>
<dbReference type="eggNOG" id="COG0481">
    <property type="taxonomic scope" value="Bacteria"/>
</dbReference>
<dbReference type="HOGENOM" id="CLU_009995_3_3_6"/>
<dbReference type="Proteomes" id="UP000000547">
    <property type="component" value="Chromosome"/>
</dbReference>
<dbReference type="GO" id="GO:0005886">
    <property type="term" value="C:plasma membrane"/>
    <property type="evidence" value="ECO:0007669"/>
    <property type="project" value="UniProtKB-SubCell"/>
</dbReference>
<dbReference type="GO" id="GO:0005525">
    <property type="term" value="F:GTP binding"/>
    <property type="evidence" value="ECO:0007669"/>
    <property type="project" value="UniProtKB-UniRule"/>
</dbReference>
<dbReference type="GO" id="GO:0003924">
    <property type="term" value="F:GTPase activity"/>
    <property type="evidence" value="ECO:0007669"/>
    <property type="project" value="UniProtKB-UniRule"/>
</dbReference>
<dbReference type="GO" id="GO:0097216">
    <property type="term" value="F:guanosine tetraphosphate binding"/>
    <property type="evidence" value="ECO:0007669"/>
    <property type="project" value="UniProtKB-ARBA"/>
</dbReference>
<dbReference type="GO" id="GO:0043022">
    <property type="term" value="F:ribosome binding"/>
    <property type="evidence" value="ECO:0007669"/>
    <property type="project" value="UniProtKB-UniRule"/>
</dbReference>
<dbReference type="GO" id="GO:0003746">
    <property type="term" value="F:translation elongation factor activity"/>
    <property type="evidence" value="ECO:0007669"/>
    <property type="project" value="UniProtKB-UniRule"/>
</dbReference>
<dbReference type="GO" id="GO:0045727">
    <property type="term" value="P:positive regulation of translation"/>
    <property type="evidence" value="ECO:0007669"/>
    <property type="project" value="UniProtKB-UniRule"/>
</dbReference>
<dbReference type="CDD" id="cd03699">
    <property type="entry name" value="EF4_II"/>
    <property type="match status" value="1"/>
</dbReference>
<dbReference type="CDD" id="cd16260">
    <property type="entry name" value="EF4_III"/>
    <property type="match status" value="1"/>
</dbReference>
<dbReference type="CDD" id="cd01890">
    <property type="entry name" value="LepA"/>
    <property type="match status" value="1"/>
</dbReference>
<dbReference type="CDD" id="cd03709">
    <property type="entry name" value="lepA_C"/>
    <property type="match status" value="1"/>
</dbReference>
<dbReference type="FunFam" id="3.40.50.300:FF:000078">
    <property type="entry name" value="Elongation factor 4"/>
    <property type="match status" value="1"/>
</dbReference>
<dbReference type="FunFam" id="2.40.30.10:FF:000015">
    <property type="entry name" value="Translation factor GUF1, mitochondrial"/>
    <property type="match status" value="1"/>
</dbReference>
<dbReference type="FunFam" id="3.30.70.240:FF:000007">
    <property type="entry name" value="Translation factor GUF1, mitochondrial"/>
    <property type="match status" value="1"/>
</dbReference>
<dbReference type="FunFam" id="3.30.70.2570:FF:000001">
    <property type="entry name" value="Translation factor GUF1, mitochondrial"/>
    <property type="match status" value="1"/>
</dbReference>
<dbReference type="FunFam" id="3.30.70.870:FF:000004">
    <property type="entry name" value="Translation factor GUF1, mitochondrial"/>
    <property type="match status" value="1"/>
</dbReference>
<dbReference type="Gene3D" id="3.30.70.240">
    <property type="match status" value="1"/>
</dbReference>
<dbReference type="Gene3D" id="3.30.70.2570">
    <property type="entry name" value="Elongation factor 4, C-terminal domain"/>
    <property type="match status" value="1"/>
</dbReference>
<dbReference type="Gene3D" id="3.30.70.870">
    <property type="entry name" value="Elongation Factor G (Translational Gtpase), domain 3"/>
    <property type="match status" value="1"/>
</dbReference>
<dbReference type="Gene3D" id="3.40.50.300">
    <property type="entry name" value="P-loop containing nucleotide triphosphate hydrolases"/>
    <property type="match status" value="1"/>
</dbReference>
<dbReference type="Gene3D" id="2.40.30.10">
    <property type="entry name" value="Translation factors"/>
    <property type="match status" value="1"/>
</dbReference>
<dbReference type="HAMAP" id="MF_00071">
    <property type="entry name" value="LepA"/>
    <property type="match status" value="1"/>
</dbReference>
<dbReference type="InterPro" id="IPR006297">
    <property type="entry name" value="EF-4"/>
</dbReference>
<dbReference type="InterPro" id="IPR035647">
    <property type="entry name" value="EFG_III/V"/>
</dbReference>
<dbReference type="InterPro" id="IPR000640">
    <property type="entry name" value="EFG_V-like"/>
</dbReference>
<dbReference type="InterPro" id="IPR004161">
    <property type="entry name" value="EFTu-like_2"/>
</dbReference>
<dbReference type="InterPro" id="IPR031157">
    <property type="entry name" value="G_TR_CS"/>
</dbReference>
<dbReference type="InterPro" id="IPR038363">
    <property type="entry name" value="LepA_C_sf"/>
</dbReference>
<dbReference type="InterPro" id="IPR013842">
    <property type="entry name" value="LepA_CTD"/>
</dbReference>
<dbReference type="InterPro" id="IPR035654">
    <property type="entry name" value="LepA_IV"/>
</dbReference>
<dbReference type="InterPro" id="IPR027417">
    <property type="entry name" value="P-loop_NTPase"/>
</dbReference>
<dbReference type="InterPro" id="IPR005225">
    <property type="entry name" value="Small_GTP-bd"/>
</dbReference>
<dbReference type="InterPro" id="IPR000795">
    <property type="entry name" value="T_Tr_GTP-bd_dom"/>
</dbReference>
<dbReference type="InterPro" id="IPR009000">
    <property type="entry name" value="Transl_B-barrel_sf"/>
</dbReference>
<dbReference type="NCBIfam" id="TIGR01393">
    <property type="entry name" value="lepA"/>
    <property type="match status" value="1"/>
</dbReference>
<dbReference type="NCBIfam" id="TIGR00231">
    <property type="entry name" value="small_GTP"/>
    <property type="match status" value="1"/>
</dbReference>
<dbReference type="PANTHER" id="PTHR43512:SF4">
    <property type="entry name" value="TRANSLATION FACTOR GUF1 HOMOLOG, CHLOROPLASTIC"/>
    <property type="match status" value="1"/>
</dbReference>
<dbReference type="PANTHER" id="PTHR43512">
    <property type="entry name" value="TRANSLATION FACTOR GUF1-RELATED"/>
    <property type="match status" value="1"/>
</dbReference>
<dbReference type="Pfam" id="PF00679">
    <property type="entry name" value="EFG_C"/>
    <property type="match status" value="1"/>
</dbReference>
<dbReference type="Pfam" id="PF00009">
    <property type="entry name" value="GTP_EFTU"/>
    <property type="match status" value="1"/>
</dbReference>
<dbReference type="Pfam" id="PF03144">
    <property type="entry name" value="GTP_EFTU_D2"/>
    <property type="match status" value="1"/>
</dbReference>
<dbReference type="Pfam" id="PF06421">
    <property type="entry name" value="LepA_C"/>
    <property type="match status" value="1"/>
</dbReference>
<dbReference type="PRINTS" id="PR00315">
    <property type="entry name" value="ELONGATNFCT"/>
</dbReference>
<dbReference type="SMART" id="SM00838">
    <property type="entry name" value="EFG_C"/>
    <property type="match status" value="1"/>
</dbReference>
<dbReference type="SUPFAM" id="SSF54980">
    <property type="entry name" value="EF-G C-terminal domain-like"/>
    <property type="match status" value="2"/>
</dbReference>
<dbReference type="SUPFAM" id="SSF52540">
    <property type="entry name" value="P-loop containing nucleoside triphosphate hydrolases"/>
    <property type="match status" value="1"/>
</dbReference>
<dbReference type="SUPFAM" id="SSF50447">
    <property type="entry name" value="Translation proteins"/>
    <property type="match status" value="1"/>
</dbReference>
<dbReference type="PROSITE" id="PS00301">
    <property type="entry name" value="G_TR_1"/>
    <property type="match status" value="1"/>
</dbReference>
<dbReference type="PROSITE" id="PS51722">
    <property type="entry name" value="G_TR_2"/>
    <property type="match status" value="1"/>
</dbReference>
<evidence type="ECO:0000255" key="1">
    <source>
        <dbReference type="HAMAP-Rule" id="MF_00071"/>
    </source>
</evidence>
<accession>Q47WP3</accession>
<comment type="function">
    <text evidence="1">Required for accurate and efficient protein synthesis under certain stress conditions. May act as a fidelity factor of the translation reaction, by catalyzing a one-codon backward translocation of tRNAs on improperly translocated ribosomes. Back-translocation proceeds from a post-translocation (POST) complex to a pre-translocation (PRE) complex, thus giving elongation factor G a second chance to translocate the tRNAs correctly. Binds to ribosomes in a GTP-dependent manner.</text>
</comment>
<comment type="catalytic activity">
    <reaction evidence="1">
        <text>GTP + H2O = GDP + phosphate + H(+)</text>
        <dbReference type="Rhea" id="RHEA:19669"/>
        <dbReference type="ChEBI" id="CHEBI:15377"/>
        <dbReference type="ChEBI" id="CHEBI:15378"/>
        <dbReference type="ChEBI" id="CHEBI:37565"/>
        <dbReference type="ChEBI" id="CHEBI:43474"/>
        <dbReference type="ChEBI" id="CHEBI:58189"/>
        <dbReference type="EC" id="3.6.5.n1"/>
    </reaction>
</comment>
<comment type="subcellular location">
    <subcellularLocation>
        <location evidence="1">Cell inner membrane</location>
        <topology evidence="1">Peripheral membrane protein</topology>
        <orientation evidence="1">Cytoplasmic side</orientation>
    </subcellularLocation>
</comment>
<comment type="similarity">
    <text evidence="1">Belongs to the TRAFAC class translation factor GTPase superfamily. Classic translation factor GTPase family. LepA subfamily.</text>
</comment>
<proteinExistence type="inferred from homology"/>
<keyword id="KW-0997">Cell inner membrane</keyword>
<keyword id="KW-1003">Cell membrane</keyword>
<keyword id="KW-0342">GTP-binding</keyword>
<keyword id="KW-0378">Hydrolase</keyword>
<keyword id="KW-0472">Membrane</keyword>
<keyword id="KW-0547">Nucleotide-binding</keyword>
<keyword id="KW-0648">Protein biosynthesis</keyword>